<comment type="function">
    <text evidence="2">Displays esterase activity towards short chain fatty esters (acyl chain length of up to 8 carbons). Able to hydrolyze triacetylglycerol (triacetin) and tributyrylglycerol (tributyrin), but not trioleylglycerol (triolein) or cholesterol oleate. Negatively regulates MalT activity by antagonizing maltotriose binding. Inhibits MelA galactosidase activity.</text>
</comment>
<comment type="subunit">
    <text evidence="2">Homodimer. Interacts with MalT and MelA.</text>
</comment>
<comment type="subcellular location">
    <subcellularLocation>
        <location evidence="2">Cytoplasm</location>
    </subcellularLocation>
</comment>
<comment type="similarity">
    <text evidence="2">Belongs to the 'GDXG' lipolytic enzyme family.</text>
</comment>
<accession>A1A8E2</accession>
<evidence type="ECO:0000250" key="1">
    <source>
        <dbReference type="UniProtKB" id="Q5NUF3"/>
    </source>
</evidence>
<evidence type="ECO:0000255" key="2">
    <source>
        <dbReference type="HAMAP-Rule" id="MF_01958"/>
    </source>
</evidence>
<name>AES_ECOK1</name>
<reference key="1">
    <citation type="journal article" date="2007" name="J. Bacteriol.">
        <title>The genome sequence of avian pathogenic Escherichia coli strain O1:K1:H7 shares strong similarities with human extraintestinal pathogenic E. coli genomes.</title>
        <authorList>
            <person name="Johnson T.J."/>
            <person name="Kariyawasam S."/>
            <person name="Wannemuehler Y."/>
            <person name="Mangiamele P."/>
            <person name="Johnson S.J."/>
            <person name="Doetkott C."/>
            <person name="Skyberg J.A."/>
            <person name="Lynne A.M."/>
            <person name="Johnson J.R."/>
            <person name="Nolan L.K."/>
        </authorList>
    </citation>
    <scope>NUCLEOTIDE SEQUENCE [LARGE SCALE GENOMIC DNA]</scope>
</reference>
<gene>
    <name evidence="2" type="primary">aes</name>
    <name type="ordered locus">Ecok1_04380</name>
    <name type="ORF">APECO1_1539</name>
</gene>
<proteinExistence type="inferred from homology"/>
<sequence>MKPENKLPVLDLISAEMKTVVNTLQPDLPPWPATGAIAEQRQYYTLERRFWNVGAPEMATRAYRVPTKYGQVKTRLFYPQPDSPATLFYLHGGGFILGNLDTHDRIMRLLASYSQCTVIGIDYTLSPEARFPQAIEEIVAACCYFHQQAEDYQINMSRIGFAGDSAGAMLALASALWLRDKQIDCGKVAGVLLWYGLYGLRDSVTRRLLGGVWDGLTQQDLQMYEEAYLSNDADRESPYYCLFNNDLTREVPPCFIAGAEFDPLLDDSCLLYQTLAAHQQPCEFKLYSGMLHAFLHYSRMMKTADEALRDGAQFFTAQL</sequence>
<protein>
    <recommendedName>
        <fullName evidence="2">Acetyl esterase</fullName>
        <ecNumber evidence="2">3.1.1.-</ecNumber>
    </recommendedName>
</protein>
<organism>
    <name type="scientific">Escherichia coli O1:K1 / APEC</name>
    <dbReference type="NCBI Taxonomy" id="405955"/>
    <lineage>
        <taxon>Bacteria</taxon>
        <taxon>Pseudomonadati</taxon>
        <taxon>Pseudomonadota</taxon>
        <taxon>Gammaproteobacteria</taxon>
        <taxon>Enterobacterales</taxon>
        <taxon>Enterobacteriaceae</taxon>
        <taxon>Escherichia</taxon>
    </lineage>
</organism>
<dbReference type="EC" id="3.1.1.-" evidence="2"/>
<dbReference type="EMBL" id="CP000468">
    <property type="protein sequence ID" value="ABI99931.1"/>
    <property type="molecule type" value="Genomic_DNA"/>
</dbReference>
<dbReference type="RefSeq" id="WP_000801795.1">
    <property type="nucleotide sequence ID" value="NZ_CADILS010000009.1"/>
</dbReference>
<dbReference type="SMR" id="A1A8E2"/>
<dbReference type="ESTHER" id="ecoli-Aes">
    <property type="family name" value="Acetyl_esterase"/>
</dbReference>
<dbReference type="MEROPS" id="S09.A47"/>
<dbReference type="KEGG" id="ecv:APECO1_1539"/>
<dbReference type="HOGENOM" id="CLU_012494_6_4_6"/>
<dbReference type="Proteomes" id="UP000008216">
    <property type="component" value="Chromosome"/>
</dbReference>
<dbReference type="GO" id="GO:0005737">
    <property type="term" value="C:cytoplasm"/>
    <property type="evidence" value="ECO:0007669"/>
    <property type="project" value="UniProtKB-SubCell"/>
</dbReference>
<dbReference type="GO" id="GO:0052689">
    <property type="term" value="F:carboxylic ester hydrolase activity"/>
    <property type="evidence" value="ECO:0007669"/>
    <property type="project" value="UniProtKB-UniRule"/>
</dbReference>
<dbReference type="FunFam" id="3.40.50.1820:FF:000035">
    <property type="entry name" value="Acetyl esterase"/>
    <property type="match status" value="1"/>
</dbReference>
<dbReference type="Gene3D" id="3.40.50.1820">
    <property type="entry name" value="alpha/beta hydrolase"/>
    <property type="match status" value="1"/>
</dbReference>
<dbReference type="HAMAP" id="MF_01958">
    <property type="entry name" value="Acetyl_esterase"/>
    <property type="match status" value="1"/>
</dbReference>
<dbReference type="InterPro" id="IPR013094">
    <property type="entry name" value="AB_hydrolase_3"/>
</dbReference>
<dbReference type="InterPro" id="IPR029058">
    <property type="entry name" value="AB_hydrolase_fold"/>
</dbReference>
<dbReference type="InterPro" id="IPR023508">
    <property type="entry name" value="Acetyl_esterase"/>
</dbReference>
<dbReference type="InterPro" id="IPR050300">
    <property type="entry name" value="GDXG_lipolytic_enzyme"/>
</dbReference>
<dbReference type="InterPro" id="IPR002168">
    <property type="entry name" value="Lipase_GDXG_HIS_AS"/>
</dbReference>
<dbReference type="InterPro" id="IPR033140">
    <property type="entry name" value="Lipase_GDXG_put_SER_AS"/>
</dbReference>
<dbReference type="NCBIfam" id="NF007547">
    <property type="entry name" value="PRK10162.1"/>
    <property type="match status" value="1"/>
</dbReference>
<dbReference type="PANTHER" id="PTHR48081">
    <property type="entry name" value="AB HYDROLASE SUPERFAMILY PROTEIN C4A8.06C"/>
    <property type="match status" value="1"/>
</dbReference>
<dbReference type="PANTHER" id="PTHR48081:SF8">
    <property type="entry name" value="ALPHA_BETA HYDROLASE FOLD-3 DOMAIN-CONTAINING PROTEIN-RELATED"/>
    <property type="match status" value="1"/>
</dbReference>
<dbReference type="Pfam" id="PF07859">
    <property type="entry name" value="Abhydrolase_3"/>
    <property type="match status" value="1"/>
</dbReference>
<dbReference type="SUPFAM" id="SSF53474">
    <property type="entry name" value="alpha/beta-Hydrolases"/>
    <property type="match status" value="1"/>
</dbReference>
<dbReference type="PROSITE" id="PS01173">
    <property type="entry name" value="LIPASE_GDXG_HIS"/>
    <property type="match status" value="1"/>
</dbReference>
<dbReference type="PROSITE" id="PS01174">
    <property type="entry name" value="LIPASE_GDXG_SER"/>
    <property type="match status" value="1"/>
</dbReference>
<feature type="chain" id="PRO_1000188983" description="Acetyl esterase">
    <location>
        <begin position="1"/>
        <end position="319"/>
    </location>
</feature>
<feature type="short sequence motif" description="Involved in the stabilization of the negatively charged intermediate by the formation of the oxyanion hole" evidence="1">
    <location>
        <begin position="91"/>
        <end position="93"/>
    </location>
</feature>
<feature type="active site" evidence="2">
    <location>
        <position position="165"/>
    </location>
</feature>
<feature type="active site" evidence="2">
    <location>
        <position position="262"/>
    </location>
</feature>
<feature type="active site" evidence="2">
    <location>
        <position position="292"/>
    </location>
</feature>
<keyword id="KW-0963">Cytoplasm</keyword>
<keyword id="KW-0378">Hydrolase</keyword>
<keyword id="KW-1185">Reference proteome</keyword>
<keyword id="KW-0719">Serine esterase</keyword>